<reference key="1">
    <citation type="journal article" date="2004" name="J. Bacteriol.">
        <title>Complete genome sequence of the genetically tractable hydrogenotrophic methanogen Methanococcus maripaludis.</title>
        <authorList>
            <person name="Hendrickson E.L."/>
            <person name="Kaul R."/>
            <person name="Zhou Y."/>
            <person name="Bovee D."/>
            <person name="Chapman P."/>
            <person name="Chung J."/>
            <person name="Conway de Macario E."/>
            <person name="Dodsworth J.A."/>
            <person name="Gillett W."/>
            <person name="Graham D.E."/>
            <person name="Hackett M."/>
            <person name="Haydock A.K."/>
            <person name="Kang A."/>
            <person name="Land M.L."/>
            <person name="Levy R."/>
            <person name="Lie T.J."/>
            <person name="Major T.A."/>
            <person name="Moore B.C."/>
            <person name="Porat I."/>
            <person name="Palmeiri A."/>
            <person name="Rouse G."/>
            <person name="Saenphimmachak C."/>
            <person name="Soell D."/>
            <person name="Van Dien S."/>
            <person name="Wang T."/>
            <person name="Whitman W.B."/>
            <person name="Xia Q."/>
            <person name="Zhang Y."/>
            <person name="Larimer F.W."/>
            <person name="Olson M.V."/>
            <person name="Leigh J.A."/>
        </authorList>
    </citation>
    <scope>NUCLEOTIDE SEQUENCE [LARGE SCALE GENOMIC DNA]</scope>
    <source>
        <strain>DSM 14266 / JCM 13030 / NBRC 101832 / S2 / LL</strain>
    </source>
</reference>
<name>SRP19_METMP</name>
<accession>Q6LY84</accession>
<evidence type="ECO:0000255" key="1">
    <source>
        <dbReference type="HAMAP-Rule" id="MF_00305"/>
    </source>
</evidence>
<sequence length="89" mass="10461">MKEIILWPAYIDLKRTKNEGRKVPKEIAIQNPKLKEIASKIKKMGLEYSVENKKSYPKESWEICGYIKVKVDESTSKLQFLKEICINMK</sequence>
<gene>
    <name evidence="1" type="primary">srp19</name>
    <name type="ordered locus">MMP1107</name>
</gene>
<dbReference type="EMBL" id="BX950229">
    <property type="protein sequence ID" value="CAF30663.1"/>
    <property type="molecule type" value="Genomic_DNA"/>
</dbReference>
<dbReference type="RefSeq" id="WP_011171051.1">
    <property type="nucleotide sequence ID" value="NC_005791.1"/>
</dbReference>
<dbReference type="SMR" id="Q6LY84"/>
<dbReference type="STRING" id="267377.MMP1107"/>
<dbReference type="EnsemblBacteria" id="CAF30663">
    <property type="protein sequence ID" value="CAF30663"/>
    <property type="gene ID" value="MMP1107"/>
</dbReference>
<dbReference type="GeneID" id="2761602"/>
<dbReference type="KEGG" id="mmp:MMP1107"/>
<dbReference type="PATRIC" id="fig|267377.15.peg.1140"/>
<dbReference type="eggNOG" id="arCOG01217">
    <property type="taxonomic scope" value="Archaea"/>
</dbReference>
<dbReference type="HOGENOM" id="CLU_169299_1_0_2"/>
<dbReference type="OrthoDB" id="56356at2157"/>
<dbReference type="Proteomes" id="UP000000590">
    <property type="component" value="Chromosome"/>
</dbReference>
<dbReference type="GO" id="GO:0048500">
    <property type="term" value="C:signal recognition particle"/>
    <property type="evidence" value="ECO:0007669"/>
    <property type="project" value="UniProtKB-UniRule"/>
</dbReference>
<dbReference type="GO" id="GO:0008312">
    <property type="term" value="F:7S RNA binding"/>
    <property type="evidence" value="ECO:0007669"/>
    <property type="project" value="UniProtKB-UniRule"/>
</dbReference>
<dbReference type="GO" id="GO:0006617">
    <property type="term" value="P:SRP-dependent cotranslational protein targeting to membrane, signal sequence recognition"/>
    <property type="evidence" value="ECO:0007669"/>
    <property type="project" value="TreeGrafter"/>
</dbReference>
<dbReference type="Gene3D" id="3.30.56.30">
    <property type="entry name" value="Signal recognition particle, SRP19-like subunit"/>
    <property type="match status" value="1"/>
</dbReference>
<dbReference type="HAMAP" id="MF_00305">
    <property type="entry name" value="SRP19"/>
    <property type="match status" value="1"/>
</dbReference>
<dbReference type="InterPro" id="IPR002778">
    <property type="entry name" value="Signal_recog_particle_SRP19"/>
</dbReference>
<dbReference type="InterPro" id="IPR036521">
    <property type="entry name" value="SRP19-like_sf"/>
</dbReference>
<dbReference type="InterPro" id="IPR022938">
    <property type="entry name" value="SRP19_arc-type"/>
</dbReference>
<dbReference type="PANTHER" id="PTHR17453">
    <property type="entry name" value="SIGNAL RECOGNITION PARTICLE 19 KD PROTEIN"/>
    <property type="match status" value="1"/>
</dbReference>
<dbReference type="PANTHER" id="PTHR17453:SF0">
    <property type="entry name" value="SIGNAL RECOGNITION PARTICLE 19 KDA PROTEIN"/>
    <property type="match status" value="1"/>
</dbReference>
<dbReference type="Pfam" id="PF01922">
    <property type="entry name" value="SRP19"/>
    <property type="match status" value="1"/>
</dbReference>
<dbReference type="SUPFAM" id="SSF69695">
    <property type="entry name" value="SRP19"/>
    <property type="match status" value="1"/>
</dbReference>
<keyword id="KW-0963">Cytoplasm</keyword>
<keyword id="KW-1185">Reference proteome</keyword>
<keyword id="KW-0687">Ribonucleoprotein</keyword>
<keyword id="KW-0694">RNA-binding</keyword>
<keyword id="KW-0733">Signal recognition particle</keyword>
<protein>
    <recommendedName>
        <fullName evidence="1">Signal recognition particle 19 kDa protein</fullName>
        <shortName evidence="1">SRP19</shortName>
    </recommendedName>
</protein>
<organism>
    <name type="scientific">Methanococcus maripaludis (strain DSM 14266 / JCM 13030 / NBRC 101832 / S2 / LL)</name>
    <dbReference type="NCBI Taxonomy" id="267377"/>
    <lineage>
        <taxon>Archaea</taxon>
        <taxon>Methanobacteriati</taxon>
        <taxon>Methanobacteriota</taxon>
        <taxon>Methanomada group</taxon>
        <taxon>Methanococci</taxon>
        <taxon>Methanococcales</taxon>
        <taxon>Methanococcaceae</taxon>
        <taxon>Methanococcus</taxon>
    </lineage>
</organism>
<feature type="chain" id="PRO_0000322226" description="Signal recognition particle 19 kDa protein">
    <location>
        <begin position="1"/>
        <end position="89"/>
    </location>
</feature>
<proteinExistence type="inferred from homology"/>
<comment type="function">
    <text evidence="1">Involved in targeting and insertion of nascent membrane proteins into the cytoplasmic membrane. Binds directly to 7S RNA and mediates binding of the 54 kDa subunit of the SRP.</text>
</comment>
<comment type="subunit">
    <text evidence="1">Part of the signal recognition particle protein translocation system, which is composed of SRP and FtsY. Archaeal SRP consists of a 7S RNA molecule of 300 nucleotides and two protein subunits: SRP54 and SRP19.</text>
</comment>
<comment type="subcellular location">
    <subcellularLocation>
        <location evidence="1">Cytoplasm</location>
    </subcellularLocation>
</comment>
<comment type="similarity">
    <text evidence="1">Belongs to the SRP19 family.</text>
</comment>